<sequence length="244" mass="26966">MTVDWWTIGLQVINVSVLIWLLSRFFWRPICAVISRRQQEIAAQLAQVTDGQKQLEADRAAVKEARSSFEQERARIVQQAQQEAQSERQAILAKAQQDAAALEAGAKQSIAQEEAENQARWRSDAAALSCDIAGQLLAQTGCCRPARETLFDRLLKAIATLPDRERLSLRDGFTFATATAPSPDERQAYESALMTAVGEHPVITWAVDPALVEGFAVKTPYLTVASNWQADLVRIREGLSHAGH</sequence>
<evidence type="ECO:0000255" key="1">
    <source>
        <dbReference type="HAMAP-Rule" id="MF_01398"/>
    </source>
</evidence>
<feature type="chain" id="PRO_0000368507" description="ATP synthase subunit b 2">
    <location>
        <begin position="1"/>
        <end position="244"/>
    </location>
</feature>
<feature type="transmembrane region" description="Helical" evidence="1">
    <location>
        <begin position="2"/>
        <end position="22"/>
    </location>
</feature>
<protein>
    <recommendedName>
        <fullName evidence="1">ATP synthase subunit b 2</fullName>
    </recommendedName>
    <alternativeName>
        <fullName evidence="1">ATP synthase F(0) sector subunit b 2</fullName>
    </alternativeName>
    <alternativeName>
        <fullName evidence="1">ATPase subunit I 2</fullName>
    </alternativeName>
    <alternativeName>
        <fullName evidence="1">F-type ATPase subunit b 2</fullName>
        <shortName evidence="1">F-ATPase subunit b 2</shortName>
    </alternativeName>
</protein>
<organism>
    <name type="scientific">Gluconobacter oxydans (strain 621H)</name>
    <name type="common">Gluconobacter suboxydans</name>
    <dbReference type="NCBI Taxonomy" id="290633"/>
    <lineage>
        <taxon>Bacteria</taxon>
        <taxon>Pseudomonadati</taxon>
        <taxon>Pseudomonadota</taxon>
        <taxon>Alphaproteobacteria</taxon>
        <taxon>Acetobacterales</taxon>
        <taxon>Acetobacteraceae</taxon>
        <taxon>Gluconobacter</taxon>
    </lineage>
</organism>
<comment type="function">
    <text evidence="1">F(1)F(0) ATP synthase produces ATP from ADP in the presence of a proton or sodium gradient. F-type ATPases consist of two structural domains, F(1) containing the extramembraneous catalytic core and F(0) containing the membrane proton channel, linked together by a central stalk and a peripheral stalk. During catalysis, ATP synthesis in the catalytic domain of F(1) is coupled via a rotary mechanism of the central stalk subunits to proton translocation.</text>
</comment>
<comment type="function">
    <text evidence="1">Component of the F(0) channel, it forms part of the peripheral stalk, linking F(1) to F(0).</text>
</comment>
<comment type="subunit">
    <text evidence="1">F-type ATPases have 2 components, F(1) - the catalytic core - and F(0) - the membrane proton channel. F(1) has five subunits: alpha(3), beta(3), gamma(1), delta(1), epsilon(1). F(0) has three main subunits: a(1), b(2) and c(10-14). The alpha and beta chains form an alternating ring which encloses part of the gamma chain. F(1) is attached to F(0) by a central stalk formed by the gamma and epsilon chains, while a peripheral stalk is formed by the delta and b chains.</text>
</comment>
<comment type="subcellular location">
    <subcellularLocation>
        <location evidence="1">Cell inner membrane</location>
        <topology evidence="1">Single-pass membrane protein</topology>
    </subcellularLocation>
</comment>
<comment type="similarity">
    <text evidence="1">Belongs to the ATPase B chain family.</text>
</comment>
<reference key="1">
    <citation type="journal article" date="2005" name="Nat. Biotechnol.">
        <title>Complete genome sequence of the acetic acid bacterium Gluconobacter oxydans.</title>
        <authorList>
            <person name="Prust C."/>
            <person name="Hoffmeister M."/>
            <person name="Liesegang H."/>
            <person name="Wiezer A."/>
            <person name="Fricke W.F."/>
            <person name="Ehrenreich A."/>
            <person name="Gottschalk G."/>
            <person name="Deppenmeier U."/>
        </authorList>
    </citation>
    <scope>NUCLEOTIDE SEQUENCE [LARGE SCALE GENOMIC DNA]</scope>
    <source>
        <strain>621H</strain>
    </source>
</reference>
<dbReference type="EMBL" id="CP000009">
    <property type="protein sequence ID" value="AAW61909.1"/>
    <property type="molecule type" value="Genomic_DNA"/>
</dbReference>
<dbReference type="RefSeq" id="WP_011253685.1">
    <property type="nucleotide sequence ID" value="NC_006677.1"/>
</dbReference>
<dbReference type="SMR" id="Q5FNY7"/>
<dbReference type="STRING" id="290633.GOX2173"/>
<dbReference type="KEGG" id="gox:GOX2173"/>
<dbReference type="eggNOG" id="COG0711">
    <property type="taxonomic scope" value="Bacteria"/>
</dbReference>
<dbReference type="HOGENOM" id="CLU_070737_0_0_5"/>
<dbReference type="Proteomes" id="UP000006375">
    <property type="component" value="Chromosome"/>
</dbReference>
<dbReference type="GO" id="GO:0005886">
    <property type="term" value="C:plasma membrane"/>
    <property type="evidence" value="ECO:0007669"/>
    <property type="project" value="UniProtKB-SubCell"/>
</dbReference>
<dbReference type="GO" id="GO:0045259">
    <property type="term" value="C:proton-transporting ATP synthase complex"/>
    <property type="evidence" value="ECO:0007669"/>
    <property type="project" value="UniProtKB-KW"/>
</dbReference>
<dbReference type="GO" id="GO:0046933">
    <property type="term" value="F:proton-transporting ATP synthase activity, rotational mechanism"/>
    <property type="evidence" value="ECO:0007669"/>
    <property type="project" value="UniProtKB-UniRule"/>
</dbReference>
<dbReference type="GO" id="GO:0046961">
    <property type="term" value="F:proton-transporting ATPase activity, rotational mechanism"/>
    <property type="evidence" value="ECO:0007669"/>
    <property type="project" value="TreeGrafter"/>
</dbReference>
<dbReference type="CDD" id="cd06503">
    <property type="entry name" value="ATP-synt_Fo_b"/>
    <property type="match status" value="1"/>
</dbReference>
<dbReference type="HAMAP" id="MF_01398">
    <property type="entry name" value="ATP_synth_b_bprime"/>
    <property type="match status" value="1"/>
</dbReference>
<dbReference type="InterPro" id="IPR002146">
    <property type="entry name" value="ATP_synth_b/b'su_bac/chlpt"/>
</dbReference>
<dbReference type="InterPro" id="IPR050059">
    <property type="entry name" value="ATP_synthase_B_chain"/>
</dbReference>
<dbReference type="PANTHER" id="PTHR33445">
    <property type="entry name" value="ATP SYNTHASE SUBUNIT B', CHLOROPLASTIC"/>
    <property type="match status" value="1"/>
</dbReference>
<dbReference type="PANTHER" id="PTHR33445:SF2">
    <property type="entry name" value="ATP SYNTHASE SUBUNIT B', CHLOROPLASTIC"/>
    <property type="match status" value="1"/>
</dbReference>
<dbReference type="Pfam" id="PF00430">
    <property type="entry name" value="ATP-synt_B"/>
    <property type="match status" value="1"/>
</dbReference>
<keyword id="KW-0066">ATP synthesis</keyword>
<keyword id="KW-0997">Cell inner membrane</keyword>
<keyword id="KW-1003">Cell membrane</keyword>
<keyword id="KW-0138">CF(0)</keyword>
<keyword id="KW-0375">Hydrogen ion transport</keyword>
<keyword id="KW-0406">Ion transport</keyword>
<keyword id="KW-0472">Membrane</keyword>
<keyword id="KW-1185">Reference proteome</keyword>
<keyword id="KW-0812">Transmembrane</keyword>
<keyword id="KW-1133">Transmembrane helix</keyword>
<keyword id="KW-0813">Transport</keyword>
<proteinExistence type="inferred from homology"/>
<gene>
    <name evidence="1" type="primary">atpF2</name>
    <name type="ordered locus">GOX2173</name>
</gene>
<accession>Q5FNY7</accession>
<name>ATPF2_GLUOX</name>